<comment type="function">
    <text evidence="1">Core subunit of the mitochondrial membrane respiratory chain NADH dehydrogenase (Complex I) which catalyzes electron transfer from NADH through the respiratory chain, using ubiquinone as an electron acceptor. Part of the enzyme membrane arm which is embedded in the lipid bilayer and involved in proton translocation.</text>
</comment>
<comment type="catalytic activity">
    <reaction evidence="1">
        <text>a ubiquinone + NADH + 5 H(+)(in) = a ubiquinol + NAD(+) + 4 H(+)(out)</text>
        <dbReference type="Rhea" id="RHEA:29091"/>
        <dbReference type="Rhea" id="RHEA-COMP:9565"/>
        <dbReference type="Rhea" id="RHEA-COMP:9566"/>
        <dbReference type="ChEBI" id="CHEBI:15378"/>
        <dbReference type="ChEBI" id="CHEBI:16389"/>
        <dbReference type="ChEBI" id="CHEBI:17976"/>
        <dbReference type="ChEBI" id="CHEBI:57540"/>
        <dbReference type="ChEBI" id="CHEBI:57945"/>
        <dbReference type="EC" id="7.1.1.2"/>
    </reaction>
    <physiologicalReaction direction="left-to-right" evidence="1">
        <dbReference type="Rhea" id="RHEA:29092"/>
    </physiologicalReaction>
</comment>
<comment type="subunit">
    <text evidence="2">Core subunit of respiratory chain NADH dehydrogenase (Complex I) which is composed of 45 different subunits.</text>
</comment>
<comment type="subcellular location">
    <subcellularLocation>
        <location evidence="2">Mitochondrion inner membrane</location>
        <topology evidence="3">Multi-pass membrane protein</topology>
    </subcellularLocation>
</comment>
<comment type="similarity">
    <text evidence="4">Belongs to the complex I subunit 4L family.</text>
</comment>
<feature type="chain" id="PRO_0000275139" description="NADH-ubiquinone oxidoreductase chain 4L">
    <location>
        <begin position="1"/>
        <end position="98"/>
    </location>
</feature>
<feature type="transmembrane region" description="Helical" evidence="3">
    <location>
        <begin position="1"/>
        <end position="21"/>
    </location>
</feature>
<feature type="transmembrane region" description="Helical" evidence="3">
    <location>
        <begin position="29"/>
        <end position="49"/>
    </location>
</feature>
<feature type="transmembrane region" description="Helical" evidence="3">
    <location>
        <begin position="61"/>
        <end position="81"/>
    </location>
</feature>
<accession>Q8SJG7</accession>
<keyword id="KW-0249">Electron transport</keyword>
<keyword id="KW-0472">Membrane</keyword>
<keyword id="KW-0496">Mitochondrion</keyword>
<keyword id="KW-0999">Mitochondrion inner membrane</keyword>
<keyword id="KW-0520">NAD</keyword>
<keyword id="KW-1185">Reference proteome</keyword>
<keyword id="KW-0679">Respiratory chain</keyword>
<keyword id="KW-1278">Translocase</keyword>
<keyword id="KW-0812">Transmembrane</keyword>
<keyword id="KW-1133">Transmembrane helix</keyword>
<keyword id="KW-0813">Transport</keyword>
<keyword id="KW-0830">Ubiquinone</keyword>
<proteinExistence type="inferred from homology"/>
<evidence type="ECO:0000250" key="1">
    <source>
        <dbReference type="UniProtKB" id="P03901"/>
    </source>
</evidence>
<evidence type="ECO:0000250" key="2">
    <source>
        <dbReference type="UniProtKB" id="P03902"/>
    </source>
</evidence>
<evidence type="ECO:0000255" key="3"/>
<evidence type="ECO:0000305" key="4"/>
<geneLocation type="mitochondrion"/>
<gene>
    <name type="primary">MT-ND4L</name>
    <name type="synonym">MTND4L</name>
    <name type="synonym">NADH4L</name>
    <name type="synonym">ND4L</name>
</gene>
<sequence length="98" mass="10773">MPVVYVNIFLAFIVSLVGLLIYRSHLMSSLLCLEGMMLSLFVMLTVTVLNNHFTLANMAPIILLVFAACEAALGLSLLVMVSNTYGTDYVQNLNLLQC</sequence>
<dbReference type="EC" id="7.1.1.2"/>
<dbReference type="EMBL" id="AF303111">
    <property type="protein sequence ID" value="AAL85189.1"/>
    <property type="molecule type" value="Genomic_DNA"/>
</dbReference>
<dbReference type="EMBL" id="AJ428577">
    <property type="protein sequence ID" value="CAD21727.1"/>
    <property type="molecule type" value="Genomic_DNA"/>
</dbReference>
<dbReference type="RefSeq" id="NP_597989.1">
    <property type="nucleotide sequence ID" value="NC_003428.1"/>
</dbReference>
<dbReference type="SMR" id="Q8SJG7"/>
<dbReference type="STRING" id="29073.ENSUMAP00000000009"/>
<dbReference type="Ensembl" id="ENSUMAT00000000027">
    <property type="protein sequence ID" value="ENSUMAP00000000009"/>
    <property type="gene ID" value="ENSUMAG00000000027"/>
</dbReference>
<dbReference type="GeneID" id="804868"/>
<dbReference type="KEGG" id="umr:804868"/>
<dbReference type="CTD" id="4539"/>
<dbReference type="OMA" id="MYRSHLM"/>
<dbReference type="OrthoDB" id="6146597at2759"/>
<dbReference type="Proteomes" id="UP000261680">
    <property type="component" value="Mitochondrion MT"/>
</dbReference>
<dbReference type="GO" id="GO:0005743">
    <property type="term" value="C:mitochondrial inner membrane"/>
    <property type="evidence" value="ECO:0000250"/>
    <property type="project" value="UniProtKB"/>
</dbReference>
<dbReference type="GO" id="GO:0045271">
    <property type="term" value="C:respiratory chain complex I"/>
    <property type="evidence" value="ECO:0000250"/>
    <property type="project" value="UniProtKB"/>
</dbReference>
<dbReference type="GO" id="GO:0008137">
    <property type="term" value="F:NADH dehydrogenase (ubiquinone) activity"/>
    <property type="evidence" value="ECO:0000250"/>
    <property type="project" value="UniProtKB"/>
</dbReference>
<dbReference type="GO" id="GO:0042773">
    <property type="term" value="P:ATP synthesis coupled electron transport"/>
    <property type="evidence" value="ECO:0007669"/>
    <property type="project" value="InterPro"/>
</dbReference>
<dbReference type="FunFam" id="1.10.287.3510:FF:000002">
    <property type="entry name" value="NADH-ubiquinone oxidoreductase chain 4L"/>
    <property type="match status" value="1"/>
</dbReference>
<dbReference type="Gene3D" id="1.10.287.3510">
    <property type="match status" value="1"/>
</dbReference>
<dbReference type="InterPro" id="IPR001133">
    <property type="entry name" value="NADH_UbQ_OxRdtase_chain4L/K"/>
</dbReference>
<dbReference type="InterPro" id="IPR039428">
    <property type="entry name" value="NUOK/Mnh_C1-like"/>
</dbReference>
<dbReference type="PANTHER" id="PTHR11434:SF0">
    <property type="entry name" value="NADH-UBIQUINONE OXIDOREDUCTASE CHAIN 4L"/>
    <property type="match status" value="1"/>
</dbReference>
<dbReference type="PANTHER" id="PTHR11434">
    <property type="entry name" value="NADH-UBIQUINONE OXIDOREDUCTASE SUBUNIT ND4L"/>
    <property type="match status" value="1"/>
</dbReference>
<dbReference type="Pfam" id="PF00420">
    <property type="entry name" value="Oxidored_q2"/>
    <property type="match status" value="1"/>
</dbReference>
<organism>
    <name type="scientific">Ursus maritimus</name>
    <name type="common">Polar bear</name>
    <name type="synonym">Thalarctos maritimus</name>
    <dbReference type="NCBI Taxonomy" id="29073"/>
    <lineage>
        <taxon>Eukaryota</taxon>
        <taxon>Metazoa</taxon>
        <taxon>Chordata</taxon>
        <taxon>Craniata</taxon>
        <taxon>Vertebrata</taxon>
        <taxon>Euteleostomi</taxon>
        <taxon>Mammalia</taxon>
        <taxon>Eutheria</taxon>
        <taxon>Laurasiatheria</taxon>
        <taxon>Carnivora</taxon>
        <taxon>Caniformia</taxon>
        <taxon>Ursidae</taxon>
        <taxon>Ursus</taxon>
    </lineage>
</organism>
<reference key="1">
    <citation type="journal article" date="2002" name="Mol. Biol. Evol.">
        <title>Conserved primers for rapid sequencing of the complete mitochondrial genome from carnivores, applied to three species of bears.</title>
        <authorList>
            <person name="Delisle I."/>
            <person name="Strobeck C."/>
        </authorList>
    </citation>
    <scope>NUCLEOTIDE SEQUENCE [GENOMIC DNA]</scope>
</reference>
<reference key="2">
    <citation type="journal article" date="2002" name="Proc. Natl. Acad. Sci. U.S.A.">
        <title>Mammalian mitogenomic relationships and the root of the eutherian tree.</title>
        <authorList>
            <person name="Arnason U."/>
            <person name="Adegoke J.A."/>
            <person name="Bodin K."/>
            <person name="Born E.W."/>
            <person name="Esa Y.B."/>
            <person name="Gullberg A."/>
            <person name="Nilsson M."/>
            <person name="Short R.V."/>
            <person name="Xu X."/>
            <person name="Janke A."/>
        </authorList>
    </citation>
    <scope>NUCLEOTIDE SEQUENCE [GENOMIC DNA]</scope>
</reference>
<protein>
    <recommendedName>
        <fullName>NADH-ubiquinone oxidoreductase chain 4L</fullName>
        <ecNumber>7.1.1.2</ecNumber>
    </recommendedName>
    <alternativeName>
        <fullName>NADH dehydrogenase subunit 4L</fullName>
    </alternativeName>
</protein>
<name>NU4LM_URSMA</name>